<organism>
    <name type="scientific">Drosophila grimshawi</name>
    <name type="common">Hawaiian fruit fly</name>
    <name type="synonym">Idiomyia grimshawi</name>
    <dbReference type="NCBI Taxonomy" id="7222"/>
    <lineage>
        <taxon>Eukaryota</taxon>
        <taxon>Metazoa</taxon>
        <taxon>Ecdysozoa</taxon>
        <taxon>Arthropoda</taxon>
        <taxon>Hexapoda</taxon>
        <taxon>Insecta</taxon>
        <taxon>Pterygota</taxon>
        <taxon>Neoptera</taxon>
        <taxon>Endopterygota</taxon>
        <taxon>Diptera</taxon>
        <taxon>Brachycera</taxon>
        <taxon>Muscomorpha</taxon>
        <taxon>Ephydroidea</taxon>
        <taxon>Drosophilidae</taxon>
        <taxon>Drosophila</taxon>
        <taxon>Hawaiian Drosophila</taxon>
    </lineage>
</organism>
<keyword id="KW-0963">Cytoplasm</keyword>
<keyword id="KW-0396">Initiation factor</keyword>
<keyword id="KW-0597">Phosphoprotein</keyword>
<keyword id="KW-0648">Protein biosynthesis</keyword>
<keyword id="KW-1185">Reference proteome</keyword>
<keyword id="KW-0694">RNA-binding</keyword>
<reference key="1">
    <citation type="journal article" date="2007" name="Nature">
        <title>Evolution of genes and genomes on the Drosophila phylogeny.</title>
        <authorList>
            <consortium name="Drosophila 12 genomes consortium"/>
        </authorList>
    </citation>
    <scope>NUCLEOTIDE SEQUENCE [LARGE SCALE GENOMIC DNA]</scope>
    <source>
        <strain>Tucson 15287-2541.00</strain>
    </source>
</reference>
<dbReference type="EMBL" id="CH916374">
    <property type="protein sequence ID" value="EDV91459.1"/>
    <property type="molecule type" value="Genomic_DNA"/>
</dbReference>
<dbReference type="SMR" id="B4JTN0"/>
<dbReference type="FunCoup" id="B4JTN0">
    <property type="interactions" value="2763"/>
</dbReference>
<dbReference type="STRING" id="7222.B4JTN0"/>
<dbReference type="EnsemblMetazoa" id="FBtr0152869">
    <property type="protein sequence ID" value="FBpp0151361"/>
    <property type="gene ID" value="FBgn0124925"/>
</dbReference>
<dbReference type="EnsemblMetazoa" id="XM_001994794.2">
    <property type="protein sequence ID" value="XP_001994830.1"/>
    <property type="gene ID" value="LOC6568577"/>
</dbReference>
<dbReference type="GeneID" id="6568577"/>
<dbReference type="KEGG" id="dgr:6568577"/>
<dbReference type="CTD" id="42789"/>
<dbReference type="eggNOG" id="KOG2479">
    <property type="taxonomic scope" value="Eukaryota"/>
</dbReference>
<dbReference type="HOGENOM" id="CLU_024521_2_0_1"/>
<dbReference type="InParanoid" id="B4JTN0"/>
<dbReference type="OMA" id="FMDKRDN"/>
<dbReference type="OrthoDB" id="16538at2759"/>
<dbReference type="PhylomeDB" id="B4JTN0"/>
<dbReference type="ChiTaRS" id="eIF-3p66">
    <property type="organism name" value="fly"/>
</dbReference>
<dbReference type="Proteomes" id="UP000001070">
    <property type="component" value="Unassembled WGS sequence"/>
</dbReference>
<dbReference type="GO" id="GO:0016282">
    <property type="term" value="C:eukaryotic 43S preinitiation complex"/>
    <property type="evidence" value="ECO:0007669"/>
    <property type="project" value="UniProtKB-UniRule"/>
</dbReference>
<dbReference type="GO" id="GO:0033290">
    <property type="term" value="C:eukaryotic 48S preinitiation complex"/>
    <property type="evidence" value="ECO:0007669"/>
    <property type="project" value="UniProtKB-UniRule"/>
</dbReference>
<dbReference type="GO" id="GO:0005852">
    <property type="term" value="C:eukaryotic translation initiation factor 3 complex"/>
    <property type="evidence" value="ECO:0000250"/>
    <property type="project" value="UniProtKB"/>
</dbReference>
<dbReference type="GO" id="GO:0005634">
    <property type="term" value="C:nucleus"/>
    <property type="evidence" value="ECO:0007669"/>
    <property type="project" value="EnsemblMetazoa"/>
</dbReference>
<dbReference type="GO" id="GO:0098808">
    <property type="term" value="F:mRNA cap binding"/>
    <property type="evidence" value="ECO:0007669"/>
    <property type="project" value="UniProtKB-UniRule"/>
</dbReference>
<dbReference type="GO" id="GO:0003743">
    <property type="term" value="F:translation initiation factor activity"/>
    <property type="evidence" value="ECO:0000250"/>
    <property type="project" value="UniProtKB"/>
</dbReference>
<dbReference type="GO" id="GO:0002191">
    <property type="term" value="P:cap-dependent translational initiation"/>
    <property type="evidence" value="ECO:0007669"/>
    <property type="project" value="UniProtKB-UniRule"/>
</dbReference>
<dbReference type="GO" id="GO:0001732">
    <property type="term" value="P:formation of cytoplasmic translation initiation complex"/>
    <property type="evidence" value="ECO:0007669"/>
    <property type="project" value="UniProtKB-UniRule"/>
</dbReference>
<dbReference type="GO" id="GO:0006446">
    <property type="term" value="P:regulation of translational initiation"/>
    <property type="evidence" value="ECO:0000250"/>
    <property type="project" value="UniProtKB"/>
</dbReference>
<dbReference type="HAMAP" id="MF_03003">
    <property type="entry name" value="eIF3d"/>
    <property type="match status" value="1"/>
</dbReference>
<dbReference type="InterPro" id="IPR007783">
    <property type="entry name" value="eIF3d"/>
</dbReference>
<dbReference type="PANTHER" id="PTHR12399">
    <property type="entry name" value="EUKARYOTIC TRANSLATION INITIATION FACTOR 3 SUBUNIT 7"/>
    <property type="match status" value="1"/>
</dbReference>
<dbReference type="PANTHER" id="PTHR12399:SF0">
    <property type="entry name" value="EUKARYOTIC TRANSLATION INITIATION FACTOR 3 SUBUNIT D"/>
    <property type="match status" value="1"/>
</dbReference>
<dbReference type="Pfam" id="PF05091">
    <property type="entry name" value="eIF-3_zeta"/>
    <property type="match status" value="1"/>
</dbReference>
<dbReference type="PIRSF" id="PIRSF016281">
    <property type="entry name" value="EIF-3_zeta"/>
    <property type="match status" value="1"/>
</dbReference>
<name>EI3D1_DROGR</name>
<evidence type="ECO:0000250" key="1"/>
<evidence type="ECO:0000250" key="2">
    <source>
        <dbReference type="UniProtKB" id="K7IM66"/>
    </source>
</evidence>
<evidence type="ECO:0000255" key="3">
    <source>
        <dbReference type="HAMAP-Rule" id="MF_03003"/>
    </source>
</evidence>
<evidence type="ECO:0000256" key="4">
    <source>
        <dbReference type="SAM" id="MobiDB-lite"/>
    </source>
</evidence>
<protein>
    <recommendedName>
        <fullName evidence="3">Eukaryotic translation initiation factor 3 subunit D-1</fullName>
        <shortName evidence="3">eIF3d-1</shortName>
    </recommendedName>
    <alternativeName>
        <fullName evidence="3">Eukaryotic translation initiation factor 3 subunit 7-1</fullName>
    </alternativeName>
    <alternativeName>
        <fullName>Eukaryotic translation initiation factor 3 subunit p66</fullName>
    </alternativeName>
</protein>
<sequence>MSETINTGAQFPTFEKPTVQFNEKGWGPCELPDTFKDVPYQPFSKNDRLGKICDWTSTSNNDKKYQNKYASTFGTGNQYAYYHEEDETTFHLVDTARVQKPPHQRGRFRNMRNSRSGRGRNARGGLNTHGHGMTTLNSKNVKARDTRRGVGKRFGHRGPPPKMRESSVAVRADWASIEEMDFPRLIKLSLPNIKEGEDIATCGTLEYYDKTYDRINVKNEKPLQKIDRIVHTVTTTDDPVIRRLSKTVGNVFATDAILATIMCSTRSNYSWDIVIEKVGEKIFMDKRDHTEFDLLTVNESSVEPPTDDDSSCNSPRNLAIEATFINHNFSQQVLKTGDQEAKYKFEETNPFISEDEDIQVASVGYRYKKWELGSDIVLVARCEHDGVLQTPSGEPQFLSIKALNEWDSKLANGVEWRQKLDTQRGAVLANELRNNACKLAKWTVQAVLAGSDQLKLGYVSRINPRDHSRHVILGTQQFKPHEFATQINLSMDNAWGILRCIIDLVMKQKDGKYLIMKDPNKPIIRLYDIPDNTFDSDDSDDGEGDDGEAFQQVYNYANNSNKI</sequence>
<gene>
    <name evidence="3" type="primary">eIF3d1</name>
    <name type="synonym">eIF-3p66</name>
    <name type="ORF">GH17455</name>
</gene>
<comment type="function">
    <text evidence="3">mRNA cap-binding component of the eukaryotic translation initiation factor 3 (eIF-3) complex, which is involved in protein synthesis of a specialized repertoire of mRNAs and, together with other initiation factors, stimulates binding of mRNA and methionyl-tRNAi to the 40S ribosome. The eIF-3 complex specifically targets and initiates translation of a subset of mRNAs involved in cell proliferation. In the eIF-3 complex, eif3d specifically recognizes and binds the 7-methylguanosine cap of a subset of mRNAs.</text>
</comment>
<comment type="subunit">
    <text evidence="3">Component of the eukaryotic translation initiation factor 3 (eIF-3) complex. The eIF-3 complex interacts with pix.</text>
</comment>
<comment type="subcellular location">
    <subcellularLocation>
        <location evidence="3">Cytoplasm</location>
    </subcellularLocation>
</comment>
<comment type="domain">
    <text evidence="3">The RNA gate region regulates mRNA cap recognition to prevent promiscuous mRNA-binding before assembly of eif3d into the full eukaryotic translation initiation factor 3 (eIF-3) complex.</text>
</comment>
<comment type="similarity">
    <text evidence="3">Belongs to the eIF-3 subunit D family.</text>
</comment>
<accession>B4JTN0</accession>
<feature type="chain" id="PRO_0000364146" description="Eukaryotic translation initiation factor 3 subunit D-1">
    <location>
        <begin position="1"/>
        <end position="563"/>
    </location>
</feature>
<feature type="region of interest" description="Disordered" evidence="4">
    <location>
        <begin position="98"/>
        <end position="167"/>
    </location>
</feature>
<feature type="region of interest" description="RNA gate" evidence="2">
    <location>
        <begin position="291"/>
        <end position="305"/>
    </location>
</feature>
<feature type="compositionally biased region" description="Basic residues" evidence="4">
    <location>
        <begin position="100"/>
        <end position="121"/>
    </location>
</feature>
<feature type="modified residue" description="Phosphothreonine" evidence="1">
    <location>
        <position position="128"/>
    </location>
</feature>
<proteinExistence type="inferred from homology"/>